<organism>
    <name type="scientific">Rickettsia rickettsii (strain Iowa)</name>
    <dbReference type="NCBI Taxonomy" id="452659"/>
    <lineage>
        <taxon>Bacteria</taxon>
        <taxon>Pseudomonadati</taxon>
        <taxon>Pseudomonadota</taxon>
        <taxon>Alphaproteobacteria</taxon>
        <taxon>Rickettsiales</taxon>
        <taxon>Rickettsiaceae</taxon>
        <taxon>Rickettsieae</taxon>
        <taxon>Rickettsia</taxon>
        <taxon>spotted fever group</taxon>
    </lineage>
</organism>
<protein>
    <recommendedName>
        <fullName evidence="1">Probable cytosol aminopeptidase</fullName>
        <ecNumber evidence="1">3.4.11.1</ecNumber>
    </recommendedName>
    <alternativeName>
        <fullName evidence="1">Leucine aminopeptidase</fullName>
        <shortName evidence="1">LAP</shortName>
        <ecNumber evidence="1">3.4.11.10</ecNumber>
    </alternativeName>
    <alternativeName>
        <fullName evidence="1">Leucyl aminopeptidase</fullName>
    </alternativeName>
</protein>
<proteinExistence type="inferred from homology"/>
<dbReference type="EC" id="3.4.11.1" evidence="1"/>
<dbReference type="EC" id="3.4.11.10" evidence="1"/>
<dbReference type="EMBL" id="CP000766">
    <property type="protein sequence ID" value="ABY72138.1"/>
    <property type="molecule type" value="Genomic_DNA"/>
</dbReference>
<dbReference type="RefSeq" id="WP_012150400.1">
    <property type="nucleotide sequence ID" value="NC_010263.3"/>
</dbReference>
<dbReference type="SMR" id="B0BWB2"/>
<dbReference type="KEGG" id="rrj:RrIowa_0226"/>
<dbReference type="eggNOG" id="COG0260">
    <property type="taxonomic scope" value="Bacteria"/>
</dbReference>
<dbReference type="HOGENOM" id="CLU_013734_6_0_5"/>
<dbReference type="Proteomes" id="UP000000796">
    <property type="component" value="Chromosome"/>
</dbReference>
<dbReference type="GO" id="GO:0005737">
    <property type="term" value="C:cytoplasm"/>
    <property type="evidence" value="ECO:0007669"/>
    <property type="project" value="UniProtKB-SubCell"/>
</dbReference>
<dbReference type="GO" id="GO:0030145">
    <property type="term" value="F:manganese ion binding"/>
    <property type="evidence" value="ECO:0007669"/>
    <property type="project" value="UniProtKB-UniRule"/>
</dbReference>
<dbReference type="GO" id="GO:0070006">
    <property type="term" value="F:metalloaminopeptidase activity"/>
    <property type="evidence" value="ECO:0007669"/>
    <property type="project" value="InterPro"/>
</dbReference>
<dbReference type="GO" id="GO:0006508">
    <property type="term" value="P:proteolysis"/>
    <property type="evidence" value="ECO:0007669"/>
    <property type="project" value="UniProtKB-KW"/>
</dbReference>
<dbReference type="CDD" id="cd00433">
    <property type="entry name" value="Peptidase_M17"/>
    <property type="match status" value="1"/>
</dbReference>
<dbReference type="Gene3D" id="3.40.220.10">
    <property type="entry name" value="Leucine Aminopeptidase, subunit E, domain 1"/>
    <property type="match status" value="1"/>
</dbReference>
<dbReference type="Gene3D" id="3.40.630.10">
    <property type="entry name" value="Zn peptidases"/>
    <property type="match status" value="1"/>
</dbReference>
<dbReference type="HAMAP" id="MF_00181">
    <property type="entry name" value="Cytosol_peptidase_M17"/>
    <property type="match status" value="1"/>
</dbReference>
<dbReference type="InterPro" id="IPR011356">
    <property type="entry name" value="Leucine_aapep/pepB"/>
</dbReference>
<dbReference type="InterPro" id="IPR043472">
    <property type="entry name" value="Macro_dom-like"/>
</dbReference>
<dbReference type="InterPro" id="IPR000819">
    <property type="entry name" value="Peptidase_M17_C"/>
</dbReference>
<dbReference type="InterPro" id="IPR023042">
    <property type="entry name" value="Peptidase_M17_leu_NH2_pept"/>
</dbReference>
<dbReference type="InterPro" id="IPR008283">
    <property type="entry name" value="Peptidase_M17_N"/>
</dbReference>
<dbReference type="NCBIfam" id="NF002073">
    <property type="entry name" value="PRK00913.1-2"/>
    <property type="match status" value="1"/>
</dbReference>
<dbReference type="NCBIfam" id="NF002074">
    <property type="entry name" value="PRK00913.1-4"/>
    <property type="match status" value="1"/>
</dbReference>
<dbReference type="NCBIfam" id="NF002075">
    <property type="entry name" value="PRK00913.2-2"/>
    <property type="match status" value="1"/>
</dbReference>
<dbReference type="NCBIfam" id="NF002077">
    <property type="entry name" value="PRK00913.2-4"/>
    <property type="match status" value="1"/>
</dbReference>
<dbReference type="PANTHER" id="PTHR11963:SF23">
    <property type="entry name" value="CYTOSOL AMINOPEPTIDASE"/>
    <property type="match status" value="1"/>
</dbReference>
<dbReference type="PANTHER" id="PTHR11963">
    <property type="entry name" value="LEUCINE AMINOPEPTIDASE-RELATED"/>
    <property type="match status" value="1"/>
</dbReference>
<dbReference type="Pfam" id="PF00883">
    <property type="entry name" value="Peptidase_M17"/>
    <property type="match status" value="1"/>
</dbReference>
<dbReference type="Pfam" id="PF02789">
    <property type="entry name" value="Peptidase_M17_N"/>
    <property type="match status" value="1"/>
</dbReference>
<dbReference type="PRINTS" id="PR00481">
    <property type="entry name" value="LAMNOPPTDASE"/>
</dbReference>
<dbReference type="SUPFAM" id="SSF52949">
    <property type="entry name" value="Macro domain-like"/>
    <property type="match status" value="1"/>
</dbReference>
<dbReference type="SUPFAM" id="SSF53187">
    <property type="entry name" value="Zn-dependent exopeptidases"/>
    <property type="match status" value="1"/>
</dbReference>
<dbReference type="PROSITE" id="PS00631">
    <property type="entry name" value="CYTOSOL_AP"/>
    <property type="match status" value="1"/>
</dbReference>
<name>AMPA_RICRO</name>
<keyword id="KW-0031">Aminopeptidase</keyword>
<keyword id="KW-0963">Cytoplasm</keyword>
<keyword id="KW-0378">Hydrolase</keyword>
<keyword id="KW-0464">Manganese</keyword>
<keyword id="KW-0479">Metal-binding</keyword>
<keyword id="KW-0645">Protease</keyword>
<feature type="chain" id="PRO_1000077280" description="Probable cytosol aminopeptidase">
    <location>
        <begin position="1"/>
        <end position="500"/>
    </location>
</feature>
<feature type="active site" evidence="1">
    <location>
        <position position="277"/>
    </location>
</feature>
<feature type="active site" evidence="1">
    <location>
        <position position="351"/>
    </location>
</feature>
<feature type="binding site" evidence="1">
    <location>
        <position position="265"/>
    </location>
    <ligand>
        <name>Mn(2+)</name>
        <dbReference type="ChEBI" id="CHEBI:29035"/>
        <label>2</label>
    </ligand>
</feature>
<feature type="binding site" evidence="1">
    <location>
        <position position="270"/>
    </location>
    <ligand>
        <name>Mn(2+)</name>
        <dbReference type="ChEBI" id="CHEBI:29035"/>
        <label>1</label>
    </ligand>
</feature>
<feature type="binding site" evidence="1">
    <location>
        <position position="270"/>
    </location>
    <ligand>
        <name>Mn(2+)</name>
        <dbReference type="ChEBI" id="CHEBI:29035"/>
        <label>2</label>
    </ligand>
</feature>
<feature type="binding site" evidence="1">
    <location>
        <position position="288"/>
    </location>
    <ligand>
        <name>Mn(2+)</name>
        <dbReference type="ChEBI" id="CHEBI:29035"/>
        <label>2</label>
    </ligand>
</feature>
<feature type="binding site" evidence="1">
    <location>
        <position position="347"/>
    </location>
    <ligand>
        <name>Mn(2+)</name>
        <dbReference type="ChEBI" id="CHEBI:29035"/>
        <label>1</label>
    </ligand>
</feature>
<feature type="binding site" evidence="1">
    <location>
        <position position="349"/>
    </location>
    <ligand>
        <name>Mn(2+)</name>
        <dbReference type="ChEBI" id="CHEBI:29035"/>
        <label>1</label>
    </ligand>
</feature>
<feature type="binding site" evidence="1">
    <location>
        <position position="349"/>
    </location>
    <ligand>
        <name>Mn(2+)</name>
        <dbReference type="ChEBI" id="CHEBI:29035"/>
        <label>2</label>
    </ligand>
</feature>
<gene>
    <name evidence="1" type="primary">pepA</name>
    <name type="ordered locus">RrIowa_0226</name>
</gene>
<comment type="function">
    <text evidence="1">Presumably involved in the processing and regular turnover of intracellular proteins. Catalyzes the removal of unsubstituted N-terminal amino acids from various peptides.</text>
</comment>
<comment type="catalytic activity">
    <reaction evidence="1">
        <text>Release of an N-terminal amino acid, Xaa-|-Yaa-, in which Xaa is preferably Leu, but may be other amino acids including Pro although not Arg or Lys, and Yaa may be Pro. Amino acid amides and methyl esters are also readily hydrolyzed, but rates on arylamides are exceedingly low.</text>
        <dbReference type="EC" id="3.4.11.1"/>
    </reaction>
</comment>
<comment type="catalytic activity">
    <reaction evidence="1">
        <text>Release of an N-terminal amino acid, preferentially leucine, but not glutamic or aspartic acids.</text>
        <dbReference type="EC" id="3.4.11.10"/>
    </reaction>
</comment>
<comment type="cofactor">
    <cofactor evidence="1">
        <name>Mn(2+)</name>
        <dbReference type="ChEBI" id="CHEBI:29035"/>
    </cofactor>
    <text evidence="1">Binds 2 manganese ions per subunit.</text>
</comment>
<comment type="subcellular location">
    <subcellularLocation>
        <location evidence="1">Cytoplasm</location>
    </subcellularLocation>
</comment>
<comment type="similarity">
    <text evidence="1">Belongs to the peptidase M17 family.</text>
</comment>
<evidence type="ECO:0000255" key="1">
    <source>
        <dbReference type="HAMAP-Rule" id="MF_00181"/>
    </source>
</evidence>
<reference key="1">
    <citation type="journal article" date="2008" name="Infect. Immun.">
        <title>Genomic comparison of virulent Rickettsia rickettsii Sheila Smith and avirulent Rickettsia rickettsii Iowa.</title>
        <authorList>
            <person name="Ellison D.W."/>
            <person name="Clark T.R."/>
            <person name="Sturdevant D.E."/>
            <person name="Virtaneva K."/>
            <person name="Porcella S.F."/>
            <person name="Hackstadt T."/>
        </authorList>
    </citation>
    <scope>NUCLEOTIDE SEQUENCE [LARGE SCALE GENOMIC DNA]</scope>
    <source>
        <strain>Iowa</strain>
    </source>
</reference>
<sequence>MLNVNFVNEASSTNQGLVVFIDEQLKLDSNLIGLDQQHHGLISKTIQNKLQFTGKYGQIKVIPSVIKSGEVRYLIIAGLGNEEKLTEAKIEELGGKILQHATSCKISTIGLKITNRISRFTSQTFASLVASGAFLASYRFDKYRTTLKEAEKFAVESIEIFTDNSTETAKLFEIKKLIAEAVFFTRDISNEPSNIKTPQVYAERIVDRLEPLGVDVDVIGEREMKNLGMGALLGVGQGSQNESKLVVMEYKGGSKDVPTIALVGKGVIFDTGGISLKPSSDMHLMRYDMGGSAAVVGTIIAVAGQKLPVNIVGVVGLVENMLSGNAQRPGDVVTTMSGQTAEVLNTDAEGRLVLADAVWYAQEKFKPKCVIDVATLTGAITIALGNTYAGCFSNNDELADKLIKVGEEVNEKLWRMPLHDEYDAMIHSDIADMANIANVPRAAGSCIAAHFIKRFIKDGVDWAHLDIAGVANSNKASALGPKGAVGYGVRLLEKFIKEYT</sequence>
<accession>B0BWB2</accession>